<evidence type="ECO:0000255" key="1">
    <source>
        <dbReference type="HAMAP-Rule" id="MF_00271"/>
    </source>
</evidence>
<reference key="1">
    <citation type="journal article" date="2000" name="Nature">
        <title>The genome sequence of the thermoacidophilic scavenger Thermoplasma acidophilum.</title>
        <authorList>
            <person name="Ruepp A."/>
            <person name="Graml W."/>
            <person name="Santos-Martinez M.-L."/>
            <person name="Koretke K.K."/>
            <person name="Volker C."/>
            <person name="Mewes H.-W."/>
            <person name="Frishman D."/>
            <person name="Stocker S."/>
            <person name="Lupas A.N."/>
            <person name="Baumeister W."/>
        </authorList>
    </citation>
    <scope>NUCLEOTIDE SEQUENCE [LARGE SCALE GENOMIC DNA]</scope>
    <source>
        <strain>ATCC 25905 / DSM 1728 / JCM 9062 / NBRC 15155 / AMRC-C165</strain>
    </source>
</reference>
<accession>Q9HM63</accession>
<keyword id="KW-0066">ATP synthesis</keyword>
<keyword id="KW-1003">Cell membrane</keyword>
<keyword id="KW-0375">Hydrogen ion transport</keyword>
<keyword id="KW-0406">Ion transport</keyword>
<keyword id="KW-0472">Membrane</keyword>
<keyword id="KW-1185">Reference proteome</keyword>
<keyword id="KW-0813">Transport</keyword>
<dbReference type="EMBL" id="AL445063">
    <property type="protein sequence ID" value="CAC11155.1"/>
    <property type="molecule type" value="Genomic_DNA"/>
</dbReference>
<dbReference type="RefSeq" id="WP_010900433.1">
    <property type="nucleotide sequence ID" value="NC_002578.1"/>
</dbReference>
<dbReference type="SMR" id="Q9HM63"/>
<dbReference type="FunCoup" id="Q9HM63">
    <property type="interactions" value="169"/>
</dbReference>
<dbReference type="STRING" id="273075.gene:9571221"/>
<dbReference type="PaxDb" id="273075-Ta0006"/>
<dbReference type="DNASU" id="1455678"/>
<dbReference type="EnsemblBacteria" id="CAC11155">
    <property type="protein sequence ID" value="CAC11155"/>
    <property type="gene ID" value="CAC11155"/>
</dbReference>
<dbReference type="KEGG" id="tac:Ta0006"/>
<dbReference type="eggNOG" id="arCOG04101">
    <property type="taxonomic scope" value="Archaea"/>
</dbReference>
<dbReference type="HOGENOM" id="CLU_069688_2_1_2"/>
<dbReference type="InParanoid" id="Q9HM63"/>
<dbReference type="OrthoDB" id="117390at2157"/>
<dbReference type="Proteomes" id="UP000001024">
    <property type="component" value="Chromosome"/>
</dbReference>
<dbReference type="GO" id="GO:0005886">
    <property type="term" value="C:plasma membrane"/>
    <property type="evidence" value="ECO:0007669"/>
    <property type="project" value="UniProtKB-SubCell"/>
</dbReference>
<dbReference type="GO" id="GO:0005524">
    <property type="term" value="F:ATP binding"/>
    <property type="evidence" value="ECO:0007669"/>
    <property type="project" value="UniProtKB-UniRule"/>
</dbReference>
<dbReference type="GO" id="GO:0046933">
    <property type="term" value="F:proton-transporting ATP synthase activity, rotational mechanism"/>
    <property type="evidence" value="ECO:0007669"/>
    <property type="project" value="UniProtKB-UniRule"/>
</dbReference>
<dbReference type="GO" id="GO:0046961">
    <property type="term" value="F:proton-transporting ATPase activity, rotational mechanism"/>
    <property type="evidence" value="ECO:0007669"/>
    <property type="project" value="InterPro"/>
</dbReference>
<dbReference type="GO" id="GO:0042777">
    <property type="term" value="P:proton motive force-driven plasma membrane ATP synthesis"/>
    <property type="evidence" value="ECO:0007669"/>
    <property type="project" value="UniProtKB-UniRule"/>
</dbReference>
<dbReference type="Gene3D" id="1.10.287.3240">
    <property type="match status" value="1"/>
</dbReference>
<dbReference type="HAMAP" id="MF_00271">
    <property type="entry name" value="ATP_synth_D_arch"/>
    <property type="match status" value="1"/>
</dbReference>
<dbReference type="InterPro" id="IPR002699">
    <property type="entry name" value="V_ATPase_D"/>
</dbReference>
<dbReference type="NCBIfam" id="NF001545">
    <property type="entry name" value="PRK00373.1-4"/>
    <property type="match status" value="1"/>
</dbReference>
<dbReference type="NCBIfam" id="TIGR00309">
    <property type="entry name" value="V_ATPase_subD"/>
    <property type="match status" value="1"/>
</dbReference>
<dbReference type="PANTHER" id="PTHR11671">
    <property type="entry name" value="V-TYPE ATP SYNTHASE SUBUNIT D"/>
    <property type="match status" value="1"/>
</dbReference>
<dbReference type="Pfam" id="PF01813">
    <property type="entry name" value="ATP-synt_D"/>
    <property type="match status" value="1"/>
</dbReference>
<feature type="chain" id="PRO_0000144261" description="A-type ATP synthase subunit D">
    <location>
        <begin position="1"/>
        <end position="213"/>
    </location>
</feature>
<gene>
    <name evidence="1" type="primary">atpD</name>
    <name type="ordered locus">Ta0006</name>
</gene>
<comment type="function">
    <text evidence="1">Component of the A-type ATP synthase that produces ATP from ADP in the presence of a proton gradient across the membrane.</text>
</comment>
<comment type="subunit">
    <text evidence="1">Has multiple subunits with at least A(3), B(3), C, D, E, F, H, I and proteolipid K(x).</text>
</comment>
<comment type="subcellular location">
    <subcellularLocation>
        <location evidence="1">Cell membrane</location>
        <topology evidence="1">Peripheral membrane protein</topology>
    </subcellularLocation>
</comment>
<comment type="similarity">
    <text evidence="1">Belongs to the V-ATPase D subunit family.</text>
</comment>
<proteinExistence type="inferred from homology"/>
<organism>
    <name type="scientific">Thermoplasma acidophilum (strain ATCC 25905 / DSM 1728 / JCM 9062 / NBRC 15155 / AMRC-C165)</name>
    <dbReference type="NCBI Taxonomy" id="273075"/>
    <lineage>
        <taxon>Archaea</taxon>
        <taxon>Methanobacteriati</taxon>
        <taxon>Thermoplasmatota</taxon>
        <taxon>Thermoplasmata</taxon>
        <taxon>Thermoplasmatales</taxon>
        <taxon>Thermoplasmataceae</taxon>
        <taxon>Thermoplasma</taxon>
    </lineage>
</organism>
<name>AATD_THEAC</name>
<sequence>MEEGVNMDIRPTRIELIRTRRRIRLAKKGLDLLKMKRSALIYEFLQISRTIRGMKENLRKEVVEALNIIKVASVLEGSLALERIANMSSDSRINVNSRNVMGVNIPTLEVSYNLSILSDVYRTVSVPVAIDDSIRRFQKLFYDLILIVEKENSLRNLLMEIDRTKRRSNAIENILIPRLEYQAKMIKMTLDERERDTFTTLKTIKKKIEAEND</sequence>
<protein>
    <recommendedName>
        <fullName evidence="1">A-type ATP synthase subunit D</fullName>
    </recommendedName>
</protein>